<feature type="chain" id="PRO_0000108313" description="Cytochrome c">
    <location>
        <begin position="1"/>
        <end position="112"/>
    </location>
</feature>
<feature type="binding site" description="covalent" evidence="1 3">
    <location>
        <position position="22"/>
    </location>
    <ligand>
        <name>heme c</name>
        <dbReference type="ChEBI" id="CHEBI:61717"/>
    </ligand>
</feature>
<feature type="binding site" description="covalent" evidence="1 3">
    <location>
        <position position="25"/>
    </location>
    <ligand>
        <name>heme c</name>
        <dbReference type="ChEBI" id="CHEBI:61717"/>
    </ligand>
</feature>
<feature type="binding site" description="axial binding residue">
    <location>
        <position position="26"/>
    </location>
    <ligand>
        <name>heme c</name>
        <dbReference type="ChEBI" id="CHEBI:61717"/>
    </ligand>
    <ligandPart>
        <name>Fe</name>
        <dbReference type="ChEBI" id="CHEBI:18248"/>
    </ligandPart>
</feature>
<feature type="binding site" description="axial binding residue">
    <location>
        <position position="88"/>
    </location>
    <ligand>
        <name>heme c</name>
        <dbReference type="ChEBI" id="CHEBI:61717"/>
    </ligand>
    <ligandPart>
        <name>Fe</name>
        <dbReference type="ChEBI" id="CHEBI:18248"/>
    </ligandPart>
</feature>
<feature type="modified residue" description="N-acetylalanine" evidence="3">
    <location>
        <position position="1"/>
    </location>
</feature>
<feature type="modified residue" description="N6,N6,N6-trimethyllysine" evidence="2">
    <location>
        <position position="80"/>
    </location>
</feature>
<feature type="modified residue" description="N6,N6,N6-trimethyllysine" evidence="2">
    <location>
        <position position="94"/>
    </location>
</feature>
<keyword id="KW-0007">Acetylation</keyword>
<keyword id="KW-0903">Direct protein sequencing</keyword>
<keyword id="KW-0249">Electron transport</keyword>
<keyword id="KW-0349">Heme</keyword>
<keyword id="KW-0408">Iron</keyword>
<keyword id="KW-0479">Metal-binding</keyword>
<keyword id="KW-0488">Methylation</keyword>
<keyword id="KW-0496">Mitochondrion</keyword>
<keyword id="KW-1185">Reference proteome</keyword>
<keyword id="KW-0679">Respiratory chain</keyword>
<keyword id="KW-0813">Transport</keyword>
<reference key="1">
    <citation type="journal article" date="1967" name="J. Biol. Chem.">
        <title>The amino acid sequence of wheat germ cytochrome c.</title>
        <authorList>
            <person name="Stevens F.C."/>
            <person name="Glazer A.N."/>
            <person name="Smith E.L."/>
        </authorList>
    </citation>
    <scope>PROTEIN SEQUENCE</scope>
    <scope>ACETYLATION AT ALA-1</scope>
</reference>
<reference key="2">
    <citation type="journal article" date="1969" name="J. Biol. Chem.">
        <title>Presence and location of an unusual amino acid, epsilon-N-trimethyllysine, in cytochrome c of wheat germ and Neurospora.</title>
        <authorList>
            <person name="Delange R.J."/>
            <person name="Glazer A.N."/>
            <person name="Smith E.L."/>
        </authorList>
    </citation>
    <scope>METHYLATION AT LYS-80 AND LYS-94</scope>
</reference>
<accession>P00068</accession>
<sequence>ASFSEAPPGNPDAGAKIFKTKCAQCHTVDAGAGHKQGPNLHGLFGRQSGTTAGYSYSAANKNKAVEWEENTLYDYLLNPKKYIPGTKMVFPGLKKPQDRADLIAYLKKATSS</sequence>
<protein>
    <recommendedName>
        <fullName>Cytochrome c</fullName>
    </recommendedName>
</protein>
<comment type="function">
    <text>Electron carrier protein. The oxidized form of the cytochrome c heme group can accept an electron from the heme group of the cytochrome c1 subunit of cytochrome reductase. Cytochrome c then transfers this electron to the cytochrome oxidase complex, the final protein carrier in the mitochondrial electron-transport chain.</text>
</comment>
<comment type="subcellular location">
    <subcellularLocation>
        <location>Mitochondrion intermembrane space</location>
    </subcellularLocation>
    <text>Loosely associated with the inner membrane.</text>
</comment>
<comment type="PTM">
    <text>Binds 1 heme c group covalently per subunit.</text>
</comment>
<comment type="miscellaneous">
    <text>The tentative assignment of Gln-24 and Glu-69 is based on indirect evidence (electrophoretic mobilities and comparisons with other cytochromes c).</text>
</comment>
<comment type="similarity">
    <text evidence="4">Belongs to the cytochrome c family.</text>
</comment>
<comment type="online information" name="Protein Spotlight">
    <link uri="https://www.proteinspotlight.org/back_issues/076"/>
    <text>Life shuttle - Issue 76 of November 2006</text>
</comment>
<name>CYC_WHEAT</name>
<dbReference type="PIR" id="A00060">
    <property type="entry name" value="CCWT"/>
</dbReference>
<dbReference type="SMR" id="P00068"/>
<dbReference type="STRING" id="4565.P00068"/>
<dbReference type="iPTMnet" id="P00068"/>
<dbReference type="PaxDb" id="4565-Traes_1AL_45A9AD1EA.1"/>
<dbReference type="eggNOG" id="KOG3453">
    <property type="taxonomic scope" value="Eukaryota"/>
</dbReference>
<dbReference type="OMA" id="MPAPYKK"/>
<dbReference type="PRO" id="PR:P00068"/>
<dbReference type="Proteomes" id="UP000019116">
    <property type="component" value="Unplaced"/>
</dbReference>
<dbReference type="ExpressionAtlas" id="P00068">
    <property type="expression patterns" value="baseline and differential"/>
</dbReference>
<dbReference type="GO" id="GO:0005758">
    <property type="term" value="C:mitochondrial intermembrane space"/>
    <property type="evidence" value="ECO:0000318"/>
    <property type="project" value="GO_Central"/>
</dbReference>
<dbReference type="GO" id="GO:0009055">
    <property type="term" value="F:electron transfer activity"/>
    <property type="evidence" value="ECO:0000318"/>
    <property type="project" value="GO_Central"/>
</dbReference>
<dbReference type="GO" id="GO:0020037">
    <property type="term" value="F:heme binding"/>
    <property type="evidence" value="ECO:0007669"/>
    <property type="project" value="InterPro"/>
</dbReference>
<dbReference type="GO" id="GO:0046872">
    <property type="term" value="F:metal ion binding"/>
    <property type="evidence" value="ECO:0007669"/>
    <property type="project" value="UniProtKB-KW"/>
</dbReference>
<dbReference type="GO" id="GO:0006123">
    <property type="term" value="P:mitochondrial electron transport, cytochrome c to oxygen"/>
    <property type="evidence" value="ECO:0000318"/>
    <property type="project" value="GO_Central"/>
</dbReference>
<dbReference type="GO" id="GO:0006122">
    <property type="term" value="P:mitochondrial electron transport, ubiquinol to cytochrome c"/>
    <property type="evidence" value="ECO:0000318"/>
    <property type="project" value="GO_Central"/>
</dbReference>
<dbReference type="FunFam" id="1.10.760.10:FF:000001">
    <property type="entry name" value="Cytochrome c iso-1"/>
    <property type="match status" value="1"/>
</dbReference>
<dbReference type="Gene3D" id="1.10.760.10">
    <property type="entry name" value="Cytochrome c-like domain"/>
    <property type="match status" value="1"/>
</dbReference>
<dbReference type="InterPro" id="IPR009056">
    <property type="entry name" value="Cyt_c-like_dom"/>
</dbReference>
<dbReference type="InterPro" id="IPR036909">
    <property type="entry name" value="Cyt_c-like_dom_sf"/>
</dbReference>
<dbReference type="InterPro" id="IPR002327">
    <property type="entry name" value="Cyt_c_1A/1B"/>
</dbReference>
<dbReference type="PANTHER" id="PTHR11961">
    <property type="entry name" value="CYTOCHROME C"/>
    <property type="match status" value="1"/>
</dbReference>
<dbReference type="Pfam" id="PF00034">
    <property type="entry name" value="Cytochrom_C"/>
    <property type="match status" value="1"/>
</dbReference>
<dbReference type="PRINTS" id="PR00604">
    <property type="entry name" value="CYTCHRMECIAB"/>
</dbReference>
<dbReference type="SUPFAM" id="SSF46626">
    <property type="entry name" value="Cytochrome c"/>
    <property type="match status" value="1"/>
</dbReference>
<dbReference type="PROSITE" id="PS51007">
    <property type="entry name" value="CYTC"/>
    <property type="match status" value="1"/>
</dbReference>
<evidence type="ECO:0000255" key="1">
    <source>
        <dbReference type="PROSITE-ProRule" id="PRU00433"/>
    </source>
</evidence>
<evidence type="ECO:0000269" key="2">
    <source>
    </source>
</evidence>
<evidence type="ECO:0000269" key="3">
    <source>
    </source>
</evidence>
<evidence type="ECO:0000305" key="4"/>
<proteinExistence type="evidence at protein level"/>
<organism>
    <name type="scientific">Triticum aestivum</name>
    <name type="common">Wheat</name>
    <dbReference type="NCBI Taxonomy" id="4565"/>
    <lineage>
        <taxon>Eukaryota</taxon>
        <taxon>Viridiplantae</taxon>
        <taxon>Streptophyta</taxon>
        <taxon>Embryophyta</taxon>
        <taxon>Tracheophyta</taxon>
        <taxon>Spermatophyta</taxon>
        <taxon>Magnoliopsida</taxon>
        <taxon>Liliopsida</taxon>
        <taxon>Poales</taxon>
        <taxon>Poaceae</taxon>
        <taxon>BOP clade</taxon>
        <taxon>Pooideae</taxon>
        <taxon>Triticodae</taxon>
        <taxon>Triticeae</taxon>
        <taxon>Triticinae</taxon>
        <taxon>Triticum</taxon>
    </lineage>
</organism>